<dbReference type="EC" id="3.4.21.-"/>
<dbReference type="EC" id="3.4.22.45" evidence="2"/>
<dbReference type="EC" id="3.6.4.-"/>
<dbReference type="EC" id="3.4.22.44"/>
<dbReference type="EC" id="2.7.7.48"/>
<dbReference type="EMBL" id="AY206394">
    <property type="protein sequence ID" value="AAP41071.1"/>
    <property type="molecule type" value="Genomic_RNA"/>
</dbReference>
<dbReference type="RefSeq" id="NP_954611.1">
    <molecule id="Q6XW15-1"/>
    <property type="nucleotide sequence ID" value="NC_005304.1"/>
</dbReference>
<dbReference type="MEROPS" id="C06.001"/>
<dbReference type="GeneID" id="2943205"/>
<dbReference type="KEGG" id="vg:2943205"/>
<dbReference type="Proteomes" id="UP000007617">
    <property type="component" value="Genome"/>
</dbReference>
<dbReference type="GO" id="GO:0019029">
    <property type="term" value="C:helical viral capsid"/>
    <property type="evidence" value="ECO:0007669"/>
    <property type="project" value="UniProtKB-KW"/>
</dbReference>
<dbReference type="GO" id="GO:0044161">
    <property type="term" value="C:host cell cytoplasmic vesicle"/>
    <property type="evidence" value="ECO:0007669"/>
    <property type="project" value="UniProtKB-SubCell"/>
</dbReference>
<dbReference type="GO" id="GO:0042025">
    <property type="term" value="C:host cell nucleus"/>
    <property type="evidence" value="ECO:0007669"/>
    <property type="project" value="UniProtKB-SubCell"/>
</dbReference>
<dbReference type="GO" id="GO:0005524">
    <property type="term" value="F:ATP binding"/>
    <property type="evidence" value="ECO:0007669"/>
    <property type="project" value="UniProtKB-KW"/>
</dbReference>
<dbReference type="GO" id="GO:0004197">
    <property type="term" value="F:cysteine-type endopeptidase activity"/>
    <property type="evidence" value="ECO:0007669"/>
    <property type="project" value="InterPro"/>
</dbReference>
<dbReference type="GO" id="GO:0004386">
    <property type="term" value="F:helicase activity"/>
    <property type="evidence" value="ECO:0007669"/>
    <property type="project" value="UniProtKB-KW"/>
</dbReference>
<dbReference type="GO" id="GO:0016818">
    <property type="term" value="F:hydrolase activity, acting on acid anhydrides, in phosphorus-containing anhydrides"/>
    <property type="evidence" value="ECO:0007669"/>
    <property type="project" value="InterPro"/>
</dbReference>
<dbReference type="GO" id="GO:0003723">
    <property type="term" value="F:RNA binding"/>
    <property type="evidence" value="ECO:0007669"/>
    <property type="project" value="InterPro"/>
</dbReference>
<dbReference type="GO" id="GO:0003968">
    <property type="term" value="F:RNA-directed RNA polymerase activity"/>
    <property type="evidence" value="ECO:0007669"/>
    <property type="project" value="UniProtKB-KW"/>
</dbReference>
<dbReference type="GO" id="GO:0008236">
    <property type="term" value="F:serine-type peptidase activity"/>
    <property type="evidence" value="ECO:0007669"/>
    <property type="project" value="UniProtKB-KW"/>
</dbReference>
<dbReference type="GO" id="GO:0005198">
    <property type="term" value="F:structural molecule activity"/>
    <property type="evidence" value="ECO:0007669"/>
    <property type="project" value="InterPro"/>
</dbReference>
<dbReference type="GO" id="GO:0006351">
    <property type="term" value="P:DNA-templated transcription"/>
    <property type="evidence" value="ECO:0007669"/>
    <property type="project" value="InterPro"/>
</dbReference>
<dbReference type="GO" id="GO:0006508">
    <property type="term" value="P:proteolysis"/>
    <property type="evidence" value="ECO:0007669"/>
    <property type="project" value="UniProtKB-KW"/>
</dbReference>
<dbReference type="GO" id="GO:0052170">
    <property type="term" value="P:symbiont-mediated suppression of host innate immune response"/>
    <property type="evidence" value="ECO:0007669"/>
    <property type="project" value="UniProtKB-KW"/>
</dbReference>
<dbReference type="GO" id="GO:0039694">
    <property type="term" value="P:viral RNA genome replication"/>
    <property type="evidence" value="ECO:0007669"/>
    <property type="project" value="InterPro"/>
</dbReference>
<dbReference type="GO" id="GO:0075523">
    <property type="term" value="P:viral translational frameshifting"/>
    <property type="evidence" value="ECO:0007669"/>
    <property type="project" value="UniProtKB-KW"/>
</dbReference>
<dbReference type="CDD" id="cd23175">
    <property type="entry name" value="ps-ssRNAv_Potyviridae_RdRp"/>
    <property type="match status" value="1"/>
</dbReference>
<dbReference type="Gene3D" id="3.30.70.270">
    <property type="match status" value="1"/>
</dbReference>
<dbReference type="Gene3D" id="3.90.70.150">
    <property type="entry name" value="Helper component proteinase"/>
    <property type="match status" value="1"/>
</dbReference>
<dbReference type="Gene3D" id="3.40.50.300">
    <property type="entry name" value="P-loop containing nucleotide triphosphate hydrolases"/>
    <property type="match status" value="2"/>
</dbReference>
<dbReference type="Gene3D" id="2.40.10.10">
    <property type="entry name" value="Trypsin-like serine proteases"/>
    <property type="match status" value="2"/>
</dbReference>
<dbReference type="InterPro" id="IPR011545">
    <property type="entry name" value="DEAD/DEAH_box_helicase_dom"/>
</dbReference>
<dbReference type="InterPro" id="IPR043502">
    <property type="entry name" value="DNA/RNA_pol_sf"/>
</dbReference>
<dbReference type="InterPro" id="IPR001456">
    <property type="entry name" value="HC-pro"/>
</dbReference>
<dbReference type="InterPro" id="IPR031159">
    <property type="entry name" value="HC_PRO_CPD_dom"/>
</dbReference>
<dbReference type="InterPro" id="IPR042308">
    <property type="entry name" value="HC_PRO_CPD_sf"/>
</dbReference>
<dbReference type="InterPro" id="IPR014001">
    <property type="entry name" value="Helicase_ATP-bd"/>
</dbReference>
<dbReference type="InterPro" id="IPR001650">
    <property type="entry name" value="Helicase_C-like"/>
</dbReference>
<dbReference type="InterPro" id="IPR027417">
    <property type="entry name" value="P-loop_NTPase"/>
</dbReference>
<dbReference type="InterPro" id="IPR002540">
    <property type="entry name" value="Pept_S30_P1_potyvir"/>
</dbReference>
<dbReference type="InterPro" id="IPR009003">
    <property type="entry name" value="Peptidase_S1_PA"/>
</dbReference>
<dbReference type="InterPro" id="IPR043504">
    <property type="entry name" value="Peptidase_S1_PA_chymotrypsin"/>
</dbReference>
<dbReference type="InterPro" id="IPR001592">
    <property type="entry name" value="Poty_coat"/>
</dbReference>
<dbReference type="InterPro" id="IPR001730">
    <property type="entry name" value="Potyv_NIa-pro_dom"/>
</dbReference>
<dbReference type="InterPro" id="IPR039560">
    <property type="entry name" value="Potyvirid-P3"/>
</dbReference>
<dbReference type="InterPro" id="IPR013648">
    <property type="entry name" value="PP_Potyviridae"/>
</dbReference>
<dbReference type="InterPro" id="IPR043128">
    <property type="entry name" value="Rev_trsase/Diguanyl_cyclase"/>
</dbReference>
<dbReference type="InterPro" id="IPR001205">
    <property type="entry name" value="RNA-dir_pol_C"/>
</dbReference>
<dbReference type="InterPro" id="IPR007094">
    <property type="entry name" value="RNA-dir_pol_PSvirus"/>
</dbReference>
<dbReference type="PANTHER" id="PTHR43519">
    <property type="entry name" value="ATP-DEPENDENT RNA HELICASE HRPB"/>
    <property type="match status" value="1"/>
</dbReference>
<dbReference type="PANTHER" id="PTHR43519:SF1">
    <property type="entry name" value="ATP-DEPENDENT RNA HELICASE HRPB"/>
    <property type="match status" value="1"/>
</dbReference>
<dbReference type="Pfam" id="PF00270">
    <property type="entry name" value="DEAD"/>
    <property type="match status" value="1"/>
</dbReference>
<dbReference type="Pfam" id="PF00271">
    <property type="entry name" value="Helicase_C"/>
    <property type="match status" value="1"/>
</dbReference>
<dbReference type="Pfam" id="PF00863">
    <property type="entry name" value="Peptidase_C4"/>
    <property type="match status" value="1"/>
</dbReference>
<dbReference type="Pfam" id="PF00851">
    <property type="entry name" value="Peptidase_C6"/>
    <property type="match status" value="1"/>
</dbReference>
<dbReference type="Pfam" id="PF01577">
    <property type="entry name" value="Peptidase_S30"/>
    <property type="match status" value="1"/>
</dbReference>
<dbReference type="Pfam" id="PF00767">
    <property type="entry name" value="Poty_coat"/>
    <property type="match status" value="1"/>
</dbReference>
<dbReference type="Pfam" id="PF08440">
    <property type="entry name" value="Poty_PP"/>
    <property type="match status" value="1"/>
</dbReference>
<dbReference type="Pfam" id="PF13608">
    <property type="entry name" value="Potyvirid-P3"/>
    <property type="match status" value="1"/>
</dbReference>
<dbReference type="Pfam" id="PF00680">
    <property type="entry name" value="RdRP_1"/>
    <property type="match status" value="1"/>
</dbReference>
<dbReference type="PRINTS" id="PR00966">
    <property type="entry name" value="NIAPOTYPTASE"/>
</dbReference>
<dbReference type="SMART" id="SM00487">
    <property type="entry name" value="DEXDc"/>
    <property type="match status" value="1"/>
</dbReference>
<dbReference type="SMART" id="SM00490">
    <property type="entry name" value="HELICc"/>
    <property type="match status" value="1"/>
</dbReference>
<dbReference type="SUPFAM" id="SSF56672">
    <property type="entry name" value="DNA/RNA polymerases"/>
    <property type="match status" value="1"/>
</dbReference>
<dbReference type="SUPFAM" id="SSF52540">
    <property type="entry name" value="P-loop containing nucleoside triphosphate hydrolases"/>
    <property type="match status" value="2"/>
</dbReference>
<dbReference type="SUPFAM" id="SSF50494">
    <property type="entry name" value="Trypsin-like serine proteases"/>
    <property type="match status" value="1"/>
</dbReference>
<dbReference type="PROSITE" id="PS51744">
    <property type="entry name" value="HC_PRO_CPD"/>
    <property type="match status" value="1"/>
</dbReference>
<dbReference type="PROSITE" id="PS51192">
    <property type="entry name" value="HELICASE_ATP_BIND_1"/>
    <property type="match status" value="1"/>
</dbReference>
<dbReference type="PROSITE" id="PS51194">
    <property type="entry name" value="HELICASE_CTER"/>
    <property type="match status" value="1"/>
</dbReference>
<dbReference type="PROSITE" id="PS51436">
    <property type="entry name" value="POTYVIRUS_NIA_PRO"/>
    <property type="match status" value="1"/>
</dbReference>
<dbReference type="PROSITE" id="PS51871">
    <property type="entry name" value="PV_P1_PRO"/>
    <property type="match status" value="1"/>
</dbReference>
<dbReference type="PROSITE" id="PS50507">
    <property type="entry name" value="RDRP_SSRNA_POS"/>
    <property type="match status" value="1"/>
</dbReference>
<protein>
    <recommendedName>
        <fullName>Genome polyprotein</fullName>
    </recommendedName>
    <component>
        <recommendedName>
            <fullName>P1 protease</fullName>
            <ecNumber>3.4.21.-</ecNumber>
        </recommendedName>
        <alternativeName>
            <fullName>Leader protease P1</fullName>
        </alternativeName>
        <alternativeName>
            <fullName>N-terminal protein</fullName>
        </alternativeName>
        <alternativeName>
            <fullName>P1 proteinase</fullName>
        </alternativeName>
    </component>
    <component>
        <recommendedName>
            <fullName>Helper component proteinase</fullName>
            <shortName>HC-pro</shortName>
            <ecNumber evidence="2">3.4.22.45</ecNumber>
        </recommendedName>
    </component>
    <component>
        <recommendedName>
            <fullName>Protein P3</fullName>
        </recommendedName>
    </component>
    <component>
        <recommendedName>
            <fullName>6 kDa protein 1</fullName>
            <shortName>6K1</shortName>
        </recommendedName>
    </component>
    <component>
        <recommendedName>
            <fullName>Cytoplasmic inclusion protein</fullName>
            <shortName>CI</shortName>
            <ecNumber>3.6.4.-</ecNumber>
        </recommendedName>
    </component>
    <component>
        <recommendedName>
            <fullName>6 kDa protein 2</fullName>
            <shortName>6K2</shortName>
        </recommendedName>
    </component>
    <component>
        <recommendedName>
            <fullName>Viral genome-linked protein</fullName>
        </recommendedName>
        <alternativeName>
            <fullName>VPg</fullName>
        </alternativeName>
    </component>
    <component>
        <recommendedName>
            <fullName>Nuclear inclusion protein A</fullName>
            <shortName>NI-a</shortName>
            <shortName>NIa</shortName>
            <ecNumber>3.4.22.44</ecNumber>
        </recommendedName>
        <alternativeName>
            <fullName>49 kDa proteinase</fullName>
            <shortName>49 kDa-Pro</shortName>
        </alternativeName>
        <alternativeName>
            <fullName>NIa-pro</fullName>
        </alternativeName>
    </component>
    <component>
        <recommendedName>
            <fullName>Nuclear inclusion protein B</fullName>
            <shortName>NI-b</shortName>
            <shortName>NIb</shortName>
            <ecNumber>2.7.7.48</ecNumber>
        </recommendedName>
        <alternativeName>
            <fullName>RNA-directed RNA polymerase</fullName>
        </alternativeName>
    </component>
    <component>
        <recommendedName>
            <fullName>Capsid protein</fullName>
            <shortName>CP</shortName>
        </recommendedName>
        <alternativeName>
            <fullName>Coat protein</fullName>
        </alternativeName>
    </component>
</protein>
<comment type="function">
    <molecule>Helper component proteinase</molecule>
    <text evidence="2">Required for aphid transmission and also has proteolytic activity. Only cleaves a Gly-Gly dipeptide at its own C-terminus. Interacts with virions and aphid stylets. Acts as a suppressor of RNA-mediated gene silencing, also known as post-transcriptional gene silencing (PTGS), a mechanism of plant viral defense that limits the accumulation of viral RNAs. May have RNA-binding activity.</text>
</comment>
<comment type="function">
    <molecule>Cytoplasmic inclusion protein</molecule>
    <text>Has helicase activity. It may be involved in replication.</text>
</comment>
<comment type="function">
    <molecule>6 kDa protein 1</molecule>
    <text evidence="4 8">Indispensable for virus replication (By similarity). Reduces the abundance of host transcripts related to jasmonic acid biosynthesis therefore altering the host defenses (By similarity). In order to increase its own stability, decreases host protein degradation pathways (By similarity).</text>
</comment>
<comment type="function">
    <molecule>6 kDa protein 2</molecule>
    <text evidence="3">Indispensable for virus replication.</text>
</comment>
<comment type="function">
    <molecule>Viral genome-linked protein</molecule>
    <text evidence="6">Mediates the cap-independent, EIF4E-dependent translation of viral genomic RNAs (By similarity). Binds to the cap-binding site of host EIF4E and thus interferes with the host EIF4E-dependent mRNA export and translation (By similarity). VPg-RNA directly binds EIF4E and is a template for transcription (By similarity). Also forms trimeric complexes with EIF4E-EIF4G, which are templates for translation (By similarity).</text>
</comment>
<comment type="function">
    <molecule>Nuclear inclusion protein A</molecule>
    <text evidence="2">Has RNA-binding and proteolytic activities.</text>
</comment>
<comment type="function">
    <molecule>Nuclear inclusion protein B</molecule>
    <text>An RNA-dependent RNA polymerase that plays an essential role in the virus replication.</text>
</comment>
<comment type="function">
    <molecule>Capsid protein</molecule>
    <text evidence="2">Involved in aphid transmission, cell-to-cell and systemis movement, encapsidation of the viral RNA and in the regulation of viral RNA amplification.</text>
</comment>
<comment type="catalytic activity">
    <molecule>Nuclear inclusion protein B</molecule>
    <reaction evidence="10">
        <text>RNA(n) + a ribonucleoside 5'-triphosphate = RNA(n+1) + diphosphate</text>
        <dbReference type="Rhea" id="RHEA:21248"/>
        <dbReference type="Rhea" id="RHEA-COMP:14527"/>
        <dbReference type="Rhea" id="RHEA-COMP:17342"/>
        <dbReference type="ChEBI" id="CHEBI:33019"/>
        <dbReference type="ChEBI" id="CHEBI:61557"/>
        <dbReference type="ChEBI" id="CHEBI:140395"/>
        <dbReference type="EC" id="2.7.7.48"/>
    </reaction>
</comment>
<comment type="catalytic activity">
    <molecule>Nuclear inclusion protein A</molecule>
    <reaction evidence="2">
        <text>Hydrolyzes glutaminyl bonds, and activity is further restricted by preferences for the amino acids in P6 - P1' that vary with the species of potyvirus, e.g. Glu-Xaa-Xaa-Tyr-Xaa-Gln-|-(Ser or Gly) for the enzyme from tobacco etch virus. The natural substrate is the viral polyprotein, but other proteins and oligopeptides containing the appropriate consensus sequence are also cleaved.</text>
        <dbReference type="EC" id="3.4.22.44"/>
    </reaction>
</comment>
<comment type="catalytic activity">
    <molecule>Helper component proteinase</molecule>
    <reaction evidence="2">
        <text>Hydrolyzes a Gly-|-Gly bond at its own C-terminus, commonly in the sequence -Tyr-Xaa-Val-Gly-|-Gly, in the processing of the potyviral polyprotein.</text>
        <dbReference type="EC" id="3.4.22.45"/>
    </reaction>
</comment>
<comment type="subunit">
    <molecule>Viral genome-linked protein</molecule>
    <text evidence="6">Interacts with host eIF4E protein (via cap-binding region); this interaction mediates the translation of the VPg-viral RNA conjugates (By similarity). Part of a complex that comprises VPg, RNA, host EIF4E and EIF4G; this interaction mediates the translation of the VPg-viral RNA conjugates (By similarity).</text>
</comment>
<comment type="subcellular location">
    <molecule>6 kDa protein 1</molecule>
    <subcellularLocation>
        <location>Host cytoplasmic vesicle</location>
    </subcellularLocation>
    <text evidence="4">Probably colocalizes with 6K2-induced vesicles associated with host chloroplasts.</text>
</comment>
<comment type="subcellular location">
    <molecule>6 kDa protein 2</molecule>
    <subcellularLocation>
        <location evidence="3">Host cytoplasmic vesicle</location>
    </subcellularLocation>
    <text evidence="3">6K-induced vesicles associate with host chloroplasts.</text>
</comment>
<comment type="subcellular location">
    <molecule>Viral genome-linked protein</molecule>
    <subcellularLocation>
        <location evidence="7">Host nucleus</location>
    </subcellularLocation>
    <text evidence="7">Binds to host plant eIF4E proteins in the host nucleus.</text>
</comment>
<comment type="subcellular location">
    <molecule>Capsid protein</molecule>
    <subcellularLocation>
        <location evidence="17">Virion</location>
    </subcellularLocation>
</comment>
<comment type="alternative products">
    <event type="ribosomal frameshifting"/>
    <isoform>
        <id>Q6XW15-1</id>
        <name>Genome polyprotein</name>
        <sequence type="displayed"/>
    </isoform>
    <isoform>
        <id>P0CJ96-1</id>
        <name>P3N-PIPO polyprotein</name>
        <sequence type="external"/>
    </isoform>
</comment>
<comment type="domain">
    <molecule>Helper component proteinase</molecule>
    <text>The N-terminus is involved in interaction with stylets. The central part is involved in interaction with virions and the C-terminus is involved in cell-to cell movement of the virus.</text>
</comment>
<comment type="PTM">
    <molecule>Viral genome-linked protein</molecule>
    <text evidence="3">VPg is uridylylated by the polymerase and is covalently attached to the 5'-end of the genomic RNA. This uridylylated form acts as a nucleotide-peptide primer for the polymerase (By similarity).</text>
</comment>
<comment type="PTM">
    <molecule>Genome polyprotein</molecule>
    <text evidence="1">Potyviral RNA is expressed as two polyproteins which undergo post-translational proteolytic processing. Genome polyprotein is processed by NIa-pro, P1 and HC-pro proteinases resulting in the production of at least ten individual proteins. P3N-PIPO polyprotein is cleaved by P1 and HC-pro proteinases resulting in the production of three individual proteins. The P1 proteinase and the HC-pro cleave only their respective C-termini autocatalytically. 6K1 is essential for proper proteolytic separation of P3 from CI (By similarity).</text>
</comment>
<comment type="miscellaneous">
    <molecule>Isoform Genome polyprotein</molecule>
    <text>Produced by conventional translation.</text>
</comment>
<comment type="similarity">
    <text evidence="17">Belongs to the potyviridae genome polyprotein family.</text>
</comment>
<evidence type="ECO:0000250" key="1"/>
<evidence type="ECO:0000250" key="2">
    <source>
        <dbReference type="UniProtKB" id="P04517"/>
    </source>
</evidence>
<evidence type="ECO:0000250" key="3">
    <source>
        <dbReference type="UniProtKB" id="P09814"/>
    </source>
</evidence>
<evidence type="ECO:0000250" key="4">
    <source>
        <dbReference type="UniProtKB" id="P13529"/>
    </source>
</evidence>
<evidence type="ECO:0000250" key="5">
    <source>
        <dbReference type="UniProtKB" id="P17767"/>
    </source>
</evidence>
<evidence type="ECO:0000250" key="6">
    <source>
        <dbReference type="UniProtKB" id="P18247"/>
    </source>
</evidence>
<evidence type="ECO:0000250" key="7">
    <source>
        <dbReference type="UniProtKB" id="P21231"/>
    </source>
</evidence>
<evidence type="ECO:0000250" key="8">
    <source>
        <dbReference type="UniProtKB" id="P89509"/>
    </source>
</evidence>
<evidence type="ECO:0000255" key="9"/>
<evidence type="ECO:0000255" key="10">
    <source>
        <dbReference type="PROSITE-ProRule" id="PRU00539"/>
    </source>
</evidence>
<evidence type="ECO:0000255" key="11">
    <source>
        <dbReference type="PROSITE-ProRule" id="PRU00541"/>
    </source>
</evidence>
<evidence type="ECO:0000255" key="12">
    <source>
        <dbReference type="PROSITE-ProRule" id="PRU00542"/>
    </source>
</evidence>
<evidence type="ECO:0000255" key="13">
    <source>
        <dbReference type="PROSITE-ProRule" id="PRU00766"/>
    </source>
</evidence>
<evidence type="ECO:0000255" key="14">
    <source>
        <dbReference type="PROSITE-ProRule" id="PRU01080"/>
    </source>
</evidence>
<evidence type="ECO:0000255" key="15">
    <source>
        <dbReference type="PROSITE-ProRule" id="PRU01219"/>
    </source>
</evidence>
<evidence type="ECO:0000256" key="16">
    <source>
        <dbReference type="SAM" id="MobiDB-lite"/>
    </source>
</evidence>
<evidence type="ECO:0000305" key="17"/>
<name>POLG_BTMV</name>
<accession>Q6XW15</accession>
<reference key="1">
    <citation type="journal article" date="2004" name="Arch. Virol.">
        <title>The complete nucleotide sequence, genome organization, and specific detection of beet mosaic virus.</title>
        <authorList>
            <person name="Nemchinov L.G."/>
            <person name="Hammond J."/>
            <person name="Jordan R."/>
            <person name="Hammond R.W."/>
        </authorList>
    </citation>
    <scope>NUCLEOTIDE SEQUENCE [GENOMIC RNA]</scope>
</reference>
<reference key="2">
    <citation type="journal article" date="2001" name="Virus Res.">
        <title>Potyvirus proteins: a wealth of functions.</title>
        <authorList>
            <person name="Urcuqui-Inchima S."/>
            <person name="Haenni A.L."/>
            <person name="Bernardi F."/>
        </authorList>
    </citation>
    <scope>REVIEW</scope>
</reference>
<keyword id="KW-0067">ATP-binding</keyword>
<keyword id="KW-0167">Capsid protein</keyword>
<keyword id="KW-0191">Covalent protein-RNA linkage</keyword>
<keyword id="KW-1139">Helical capsid protein</keyword>
<keyword id="KW-0347">Helicase</keyword>
<keyword id="KW-1036">Host cytoplasmic vesicle</keyword>
<keyword id="KW-1048">Host nucleus</keyword>
<keyword id="KW-0945">Host-virus interaction</keyword>
<keyword id="KW-0378">Hydrolase</keyword>
<keyword id="KW-1090">Inhibition of host innate immune response by virus</keyword>
<keyword id="KW-0547">Nucleotide-binding</keyword>
<keyword id="KW-0548">Nucleotidyltransferase</keyword>
<keyword id="KW-0597">Phosphoprotein</keyword>
<keyword id="KW-0645">Protease</keyword>
<keyword id="KW-0688">Ribosomal frameshifting</keyword>
<keyword id="KW-0696">RNA-directed RNA polymerase</keyword>
<keyword id="KW-0720">Serine protease</keyword>
<keyword id="KW-0941">Suppressor of RNA silencing</keyword>
<keyword id="KW-0788">Thiol protease</keyword>
<keyword id="KW-0808">Transferase</keyword>
<keyword id="KW-0899">Viral immunoevasion</keyword>
<keyword id="KW-0693">Viral RNA replication</keyword>
<keyword id="KW-0946">Virion</keyword>
<proteinExistence type="inferred from homology"/>
<feature type="chain" id="PRO_0000419994" description="Genome polyprotein">
    <location>
        <begin position="1"/>
        <end position="3085"/>
    </location>
</feature>
<feature type="chain" id="PRO_0000040246" description="P1 protease" evidence="9">
    <location>
        <begin position="1"/>
        <end position="313"/>
    </location>
</feature>
<feature type="chain" id="PRO_0000040247" description="Helper component proteinase" evidence="9">
    <location>
        <begin position="314"/>
        <end position="770"/>
    </location>
</feature>
<feature type="chain" id="PRO_0000040248" description="Protein P3" evidence="9">
    <location>
        <begin position="771"/>
        <end position="1117"/>
    </location>
</feature>
<feature type="chain" id="PRO_0000040249" description="6 kDa protein 1" evidence="1">
    <location>
        <begin position="1118"/>
        <end position="1169"/>
    </location>
</feature>
<feature type="chain" id="PRO_0000040250" description="Cytoplasmic inclusion protein" evidence="1">
    <location>
        <begin position="1170"/>
        <end position="1803"/>
    </location>
</feature>
<feature type="chain" id="PRO_0000040251" description="6 kDa protein 2" evidence="1">
    <location>
        <begin position="1804"/>
        <end position="1855"/>
    </location>
</feature>
<feature type="chain" id="PRO_0000040252" description="Viral genome-linked protein" evidence="1">
    <location>
        <begin position="1856"/>
        <end position="2046"/>
    </location>
</feature>
<feature type="chain" id="PRO_0000040253" description="Nuclear inclusion protein A" evidence="1">
    <location>
        <begin position="2047"/>
        <end position="2293"/>
    </location>
</feature>
<feature type="chain" id="PRO_0000040254" description="Nuclear inclusion protein B" evidence="1">
    <location>
        <begin position="2294"/>
        <end position="2809"/>
    </location>
</feature>
<feature type="chain" id="PRO_0000040255" description="Capsid protein">
    <location>
        <begin position="2810"/>
        <end position="3085"/>
    </location>
</feature>
<feature type="domain" description="Peptidase S30" evidence="15">
    <location>
        <begin position="170"/>
        <end position="313"/>
    </location>
</feature>
<feature type="domain" description="Peptidase C6" evidence="14">
    <location>
        <begin position="648"/>
        <end position="770"/>
    </location>
</feature>
<feature type="domain" description="Helicase ATP-binding" evidence="11">
    <location>
        <begin position="1241"/>
        <end position="1393"/>
    </location>
</feature>
<feature type="domain" description="Helicase C-terminal" evidence="12">
    <location>
        <begin position="1412"/>
        <end position="1571"/>
    </location>
</feature>
<feature type="domain" description="Peptidase C4" evidence="13">
    <location>
        <begin position="2047"/>
        <end position="2266"/>
    </location>
</feature>
<feature type="domain" description="RdRp catalytic" evidence="10">
    <location>
        <begin position="2535"/>
        <end position="2659"/>
    </location>
</feature>
<feature type="region of interest" description="Disordered" evidence="16">
    <location>
        <begin position="2801"/>
        <end position="2869"/>
    </location>
</feature>
<feature type="short sequence motif" description="Involved in interaction with stylet and aphid transmission" evidence="1">
    <location>
        <begin position="365"/>
        <end position="368"/>
    </location>
</feature>
<feature type="short sequence motif" description="Involved in virions binding and aphid transmission" evidence="1">
    <location>
        <begin position="622"/>
        <end position="624"/>
    </location>
</feature>
<feature type="short sequence motif" description="DESH box">
    <location>
        <begin position="1343"/>
        <end position="1346"/>
    </location>
</feature>
<feature type="short sequence motif" description="Nuclear localization signal" evidence="9">
    <location>
        <begin position="1895"/>
        <end position="1904"/>
    </location>
</feature>
<feature type="compositionally biased region" description="Low complexity" evidence="16">
    <location>
        <begin position="2816"/>
        <end position="2831"/>
    </location>
</feature>
<feature type="compositionally biased region" description="Basic and acidic residues" evidence="16">
    <location>
        <begin position="2839"/>
        <end position="2855"/>
    </location>
</feature>
<feature type="active site" description="For P1 proteinase activity" evidence="15">
    <location>
        <position position="224"/>
    </location>
</feature>
<feature type="active site" description="For P1 proteinase activity" evidence="15">
    <location>
        <position position="233"/>
    </location>
</feature>
<feature type="active site" description="For P1 proteinase activity" evidence="15">
    <location>
        <position position="266"/>
    </location>
</feature>
<feature type="active site" description="For helper component proteinase activity" evidence="14">
    <location>
        <position position="656"/>
    </location>
</feature>
<feature type="active site" description="For helper component proteinase activity" evidence="14">
    <location>
        <position position="729"/>
    </location>
</feature>
<feature type="active site" description="For nuclear inclusion protein A activity" evidence="13">
    <location>
        <position position="2092"/>
    </location>
</feature>
<feature type="active site" description="For nuclear inclusion protein A activity" evidence="13">
    <location>
        <position position="2127"/>
    </location>
</feature>
<feature type="active site" description="For nuclear inclusion protein A activity" evidence="13">
    <location>
        <position position="2198"/>
    </location>
</feature>
<feature type="binding site" evidence="11">
    <location>
        <begin position="1254"/>
        <end position="1261"/>
    </location>
    <ligand>
        <name>ATP</name>
        <dbReference type="ChEBI" id="CHEBI:30616"/>
    </ligand>
</feature>
<feature type="site" description="Cleavage; by P1 proteinase" evidence="15">
    <location>
        <begin position="313"/>
        <end position="314"/>
    </location>
</feature>
<feature type="site" description="Cleavage; by autolysis" evidence="14">
    <location>
        <begin position="770"/>
        <end position="771"/>
    </location>
</feature>
<feature type="site" description="Cleavage; by NIa-pro" evidence="6">
    <location>
        <begin position="1117"/>
        <end position="1118"/>
    </location>
</feature>
<feature type="site" description="Cleavage; by NIa-pro" evidence="6">
    <location>
        <begin position="1169"/>
        <end position="1170"/>
    </location>
</feature>
<feature type="site" description="Cleavage; by NIa-pro" evidence="6">
    <location>
        <begin position="1803"/>
        <end position="1804"/>
    </location>
</feature>
<feature type="site" description="Cleavage; by NIa-pro" evidence="6">
    <location>
        <begin position="1855"/>
        <end position="1856"/>
    </location>
</feature>
<feature type="site" description="Cleavage; by NIa-pro" evidence="6">
    <location>
        <begin position="2046"/>
        <end position="2047"/>
    </location>
</feature>
<feature type="site" description="Cleavage; by NIa-pro" evidence="6">
    <location>
        <begin position="2293"/>
        <end position="2294"/>
    </location>
</feature>
<feature type="site" description="Cleavage; by NIa-pro" evidence="6">
    <location>
        <begin position="2809"/>
        <end position="2810"/>
    </location>
</feature>
<feature type="modified residue" description="O-(5'-phospho-RNA)-tyrosine" evidence="3">
    <location>
        <position position="1919"/>
    </location>
</feature>
<feature type="modified residue" description="Phosphothreonine" evidence="5">
    <location>
        <position position="3068"/>
    </location>
</feature>
<sequence>MATMMHFGQFPSNIPLRAATCCTKVHSTLVTKEMMASSVKPAESSSVARPIIYSSAATDGYEKAQRAFEASFREKYSGKLEAMKYGKMVKKGGLTYVKRAGPQAIAKGIEMDAAIEKFNTAFNAGELENVTLEGDITAGISVARGESVWLRSVFWSRSLKKQARKKTPKLVAKSDFDDLFNKVLKVASLGNIPVEIVGKKANKILRCGYRRVNTSTIPYFHLPHHNSNYICRELHPQRVRWLVPLLVRHRKIRDQFSDSMIARGWSGLILPKYIASTCGRRYDEVIVRGRLYGRVEDARTKLPAGDVGRTMHYSSGEERFFAGWKEGFEKLVPAQKEHICKIVQDNKFCGKLAASIVQIAFPCHKMACDVCRNKFNEMTPEAYSELIDKHIDQRMNEINEAIVRFPGLKQVVSNFRSKHIASTNIKDNLEVAKLTQGHKANQMMQLARINSILIKGNTATPSEISDASGLLLEITRWFNNHLSVIDKGSLRAFRNKRSSKALVNPSLLCDNQRDKNGNFIWGERGYHSKRFFASHFDEVTPGDGYKEYIIRKGPQGQRKLAIGNLIVSFDLEKTRQALKGEEVEKLPLSNSCVSKRNGNYVYTSCCVTLDDGTPLYSNIKNPTKRHLVVGTTGDPKIVDLPATDTDKMYIAKEGYCYLNIFLAMLINVNENEAKAFTKMVRDIIIPMLGTWPTMQDLATACFMMTAFFPETSSAELPRILVDHTNQTMHVIDSFGSLTTGYHVLKAGTAAQLIDFASTELEGEMKWYRVGGHGLPVKEKMISALITSIFRPKKLVYLIEEDPYVLIMAMCSPRLIISLFNNGALELAAKHWISRDKNVSAIFAMLMDLSTEMSKAELLIEQHRMINECAKRVHDTQNYLDEVGPHQQEVRTFLALISDELEADKELHKTGFANFSERFHSLTEKMYVDALEEEWRGLSLLDRFSYATFVYKHKPRSTSVLPPKKSEDIDAKFVISPSWFVGKTKEHLSGGRKYVTSQITQFTSYIKRATLDRAMRIMCSCLKDLAYFMNVALVTHLLISMIAAVYNMLNDHRIAKRRLYILEMQETNTAIWHLYDTWKTVNQRDPTHEEFRKYVAKVNKNLLRHLPEEEDKAEVEYQANKVYEKKLEKAVALMALFTMIFDTEKSGAVFSILRNIKSVFSTLGEEVKYQSLDEIQSIEDEKKLTIDFDLDTEITAEHTTMDVQFEKWWDKQLSQNRVVPHYRVGGTFIEFTRHTAASVCNTICASSEQEFVVRGAVGSGKSTGLPSHLSRKGRVLLLEPTRPLAENVCKQLRKEPFHLSPTLRMRGLTTFGSSNISVMTSGYALHFHANNPQRLEEFDFIMIDESHTMDSSTMAFYCLLREYEFKGKILKVSATPPGRECEFKTQHDVLIKIEESLSYNSFVTAQGTGSNADVVQNGDNILVYVPSYNDVDQLSKGLMEKGHLVTKVDGRTMKMGNVEIPTKGTSSKKHFIVATNIIENGVTLDIDVVVDFGLKVVAELDSDSRCMRYKKVSISYGERLQRLGRVGRVKQGTALRIGHTETGMTEIPVAIATEAAFICFAYNLPVMTHNVTSSLLSRCTNRQARTMMQYELSPFFMVELVHFNGCVHPQIESKLKAYKLRDSETQLSTLAIPNSGTSRWKTVGEYKKLGVRIEADDNVRVPFAANGVPDRLYADLWETIQQHKSDAGFGRLTSACASKISYTLTTQPNAIPRTLAIIEHLLREEQQKKAYFESLNDTLCATSFSLAGMVNNIRRRYLKDHSAHNINVLQNAKSQLNEFNSKAIDPERVGDIMGYGVLDTVQYQSATDVQKRLKLKGRWNGSLAATDLLIAGAVFAGGCWMLWEYTKSGNEIVQYQGKRRQMQKLKFRNARDNKVGREVYGDDGTIEHFFGAAYTERGKRKGNNSTKGMGTKTRRFVHMYGFDPTEYSFVRFVDPLTGYSKDESVQTDISLVQSEIGEYRQKCMEDDDELIDFIKQKPGIQAYFMKNGSDKALQVDLTPHIPLLSCAKTATIAGFPERESELRQTGTPIVVNKNVVPGEHKEVVREEGKSIVKGLRNYNPISSVVCRLTNDSNGNAQTLYGVGFGPLIITNSHLFKMNNGTLFVRSHQGEFTVQNTTQLQIYHVKDKDMILIRMPKDFPPFPMKLKFRAPHSEERACLVGSRFQQKSLSSEVSDSTLIRPTDSGSGYWKHWVSTKEGDCGLPMVALKDGSLIGIHGLTSVRSELNYFVPFTDDFQSKYLSNIESLEWVKHWRHTPDKVAWNGMTLRENGPASEFSVSKLIADLTHGYVDEVVEQGYSSKWVANRLDGNLKAVASSSSQLVTKHVVKGPCVLFQEFLATHEEAARYFVPRMGEYGPSRLNKEAFLKDFLKYAGPITVGVVNTNSFEDAVASVINMLEDLDYGECAYVTDPDSIFDSLNMKAAVGALYKGKKKEYFEQLNTTEREDLLRLSCERLYEGKMGVWNGSLKAELRPKEKLEQNKTRTFTAAPIDTLLGGKVCVDDFNNRFYSLNLKGPWSVGMTKFYGGWNELLQKLPDGWIYCDADGSQFDSSLTPYLINAVVQIREHFMEDWEIGRTMLRNFYTEIVYTPILTPDGTIVKKFKGNNSGQPSTVVDNTLMVILAMHYAMHQQCWKEEEMKEKIRFFANGDDLLIAIYPSKEKFLNVLSEYFHELGLKYDFSSRSTVRETLWFMSHRGLYLDDMYIPKLEEERIVSILEWDRSNEATHRAEAICAAMIEAWGYPELLKYIREFYLWMMQHECYRDLVRDGKLPYIAETALRKLYTDKSVDENELVKYWKALAPEEDDGPDIVTYQGDEKPSKSSQPQSSSPQVPQQVDAGASSQGRDKQSVIKHDSTKSKDVGQSSTAVPRLKQISKMRMPVSKGRQVLALDHLLDYKPEQVDLSNTRATKEQFDNWYEAVMREYDVSDSQMGVIMNGLMVWCIENGTSPNLSGDWVMMDGEEQVSFPLKPIVENAKPSFRQIMHHFSDAAEAYIEMRNRERPYMPRYGAQRNLRDKTLARYAFDFYEVTSRTTDRAREAHFQMKAAALASVSNKLFGLDGSVATTSEDTERHTATDVNAHMHHMMGVRQG</sequence>
<organism>
    <name type="scientific">Beet mosaic virus</name>
    <name type="common">BtMV</name>
    <dbReference type="NCBI Taxonomy" id="114921"/>
    <lineage>
        <taxon>Viruses</taxon>
        <taxon>Riboviria</taxon>
        <taxon>Orthornavirae</taxon>
        <taxon>Pisuviricota</taxon>
        <taxon>Stelpaviricetes</taxon>
        <taxon>Patatavirales</taxon>
        <taxon>Potyviridae</taxon>
        <taxon>Potyvirus</taxon>
        <taxon>Potyvirus betaceum</taxon>
    </lineage>
</organism>
<organismHost>
    <name type="scientific">Amaranthus retroflexus</name>
    <name type="common">Redroot amaranth</name>
    <name type="synonym">American pigweed</name>
    <dbReference type="NCBI Taxonomy" id="124763"/>
</organismHost>
<organismHost>
    <name type="scientific">Beta vulgaris subsp. maritima</name>
    <name type="common">Sea beet</name>
    <name type="synonym">Beta maritima</name>
    <dbReference type="NCBI Taxonomy" id="350892"/>
</organismHost>
<organismHost>
    <name type="scientific">Beta vulgaris subsp. vulgaris</name>
    <name type="common">Beet</name>
    <dbReference type="NCBI Taxonomy" id="3555"/>
</organismHost>
<organismHost>
    <name type="scientific">Chenopodium album</name>
    <name type="common">Fat hen</name>
    <dbReference type="NCBI Taxonomy" id="3559"/>
</organismHost>
<organismHost>
    <name type="scientific">Melilotus indicus</name>
    <name type="common">Sourclover</name>
    <name type="synonym">Yellow sweet clover</name>
    <dbReference type="NCBI Taxonomy" id="200951"/>
</organismHost>
<organismHost>
    <name type="scientific">Sonchus arvensis</name>
    <name type="common">Perennial sowthistle</name>
    <dbReference type="NCBI Taxonomy" id="50192"/>
</organismHost>
<organismHost>
    <name type="scientific">Spinacia oleracea</name>
    <name type="common">Spinach</name>
    <dbReference type="NCBI Taxonomy" id="3562"/>
</organismHost>
<organismHost>
    <name type="scientific">Trifolium incarnatum</name>
    <name type="common">Crimson clover</name>
    <dbReference type="NCBI Taxonomy" id="60916"/>
</organismHost>